<comment type="function">
    <text evidence="1">Catalyzes the transfer of the gamma-phosphate of ATP to D-galactose to form alpha-D-galactose-1-phosphate (Gal-1-P).</text>
</comment>
<comment type="catalytic activity">
    <reaction evidence="1">
        <text>alpha-D-galactose + ATP = alpha-D-galactose 1-phosphate + ADP + H(+)</text>
        <dbReference type="Rhea" id="RHEA:13553"/>
        <dbReference type="ChEBI" id="CHEBI:15378"/>
        <dbReference type="ChEBI" id="CHEBI:28061"/>
        <dbReference type="ChEBI" id="CHEBI:30616"/>
        <dbReference type="ChEBI" id="CHEBI:58336"/>
        <dbReference type="ChEBI" id="CHEBI:456216"/>
        <dbReference type="EC" id="2.7.1.6"/>
    </reaction>
</comment>
<comment type="pathway">
    <text evidence="1">Carbohydrate metabolism; galactose metabolism.</text>
</comment>
<comment type="subcellular location">
    <subcellularLocation>
        <location evidence="1">Cytoplasm</location>
    </subcellularLocation>
</comment>
<comment type="similarity">
    <text evidence="1">Belongs to the GHMP kinase family. GalK subfamily.</text>
</comment>
<keyword id="KW-0067">ATP-binding</keyword>
<keyword id="KW-0119">Carbohydrate metabolism</keyword>
<keyword id="KW-0963">Cytoplasm</keyword>
<keyword id="KW-0299">Galactose metabolism</keyword>
<keyword id="KW-0418">Kinase</keyword>
<keyword id="KW-0460">Magnesium</keyword>
<keyword id="KW-0479">Metal-binding</keyword>
<keyword id="KW-0547">Nucleotide-binding</keyword>
<keyword id="KW-1185">Reference proteome</keyword>
<keyword id="KW-0808">Transferase</keyword>
<evidence type="ECO:0000255" key="1">
    <source>
        <dbReference type="HAMAP-Rule" id="MF_00246"/>
    </source>
</evidence>
<proteinExistence type="inferred from homology"/>
<dbReference type="EC" id="2.7.1.6" evidence="1"/>
<dbReference type="EMBL" id="AE003852">
    <property type="protein sequence ID" value="AAF94749.1"/>
    <property type="molecule type" value="Genomic_DNA"/>
</dbReference>
<dbReference type="PIR" id="F82181">
    <property type="entry name" value="F82181"/>
</dbReference>
<dbReference type="RefSeq" id="NP_231235.1">
    <property type="nucleotide sequence ID" value="NC_002505.1"/>
</dbReference>
<dbReference type="RefSeq" id="WP_001292299.1">
    <property type="nucleotide sequence ID" value="NZ_LT906614.1"/>
</dbReference>
<dbReference type="SMR" id="Q9KRP1"/>
<dbReference type="STRING" id="243277.VC_1595"/>
<dbReference type="DNASU" id="2613849"/>
<dbReference type="EnsemblBacteria" id="AAF94749">
    <property type="protein sequence ID" value="AAF94749"/>
    <property type="gene ID" value="VC_1595"/>
</dbReference>
<dbReference type="KEGG" id="vch:VC_1595"/>
<dbReference type="PATRIC" id="fig|243277.26.peg.1521"/>
<dbReference type="eggNOG" id="COG0153">
    <property type="taxonomic scope" value="Bacteria"/>
</dbReference>
<dbReference type="HOGENOM" id="CLU_017814_2_1_6"/>
<dbReference type="UniPathway" id="UPA00214"/>
<dbReference type="Proteomes" id="UP000000584">
    <property type="component" value="Chromosome 1"/>
</dbReference>
<dbReference type="GO" id="GO:0005829">
    <property type="term" value="C:cytosol"/>
    <property type="evidence" value="ECO:0000318"/>
    <property type="project" value="GO_Central"/>
</dbReference>
<dbReference type="GO" id="GO:0005524">
    <property type="term" value="F:ATP binding"/>
    <property type="evidence" value="ECO:0007669"/>
    <property type="project" value="UniProtKB-UniRule"/>
</dbReference>
<dbReference type="GO" id="GO:0004335">
    <property type="term" value="F:galactokinase activity"/>
    <property type="evidence" value="ECO:0000318"/>
    <property type="project" value="GO_Central"/>
</dbReference>
<dbReference type="GO" id="GO:0000287">
    <property type="term" value="F:magnesium ion binding"/>
    <property type="evidence" value="ECO:0007669"/>
    <property type="project" value="UniProtKB-UniRule"/>
</dbReference>
<dbReference type="GO" id="GO:0006012">
    <property type="term" value="P:galactose metabolic process"/>
    <property type="evidence" value="ECO:0000318"/>
    <property type="project" value="GO_Central"/>
</dbReference>
<dbReference type="FunFam" id="3.30.230.10:FF:000017">
    <property type="entry name" value="Galactokinase"/>
    <property type="match status" value="1"/>
</dbReference>
<dbReference type="FunFam" id="3.30.70.890:FF:000001">
    <property type="entry name" value="Galactokinase"/>
    <property type="match status" value="1"/>
</dbReference>
<dbReference type="Gene3D" id="3.30.230.10">
    <property type="match status" value="1"/>
</dbReference>
<dbReference type="Gene3D" id="3.30.70.890">
    <property type="entry name" value="GHMP kinase, C-terminal domain"/>
    <property type="match status" value="1"/>
</dbReference>
<dbReference type="HAMAP" id="MF_00246">
    <property type="entry name" value="Galactokinase"/>
    <property type="match status" value="1"/>
</dbReference>
<dbReference type="InterPro" id="IPR000705">
    <property type="entry name" value="Galactokinase"/>
</dbReference>
<dbReference type="InterPro" id="IPR022963">
    <property type="entry name" value="Galactokinase_bac"/>
</dbReference>
<dbReference type="InterPro" id="IPR019741">
    <property type="entry name" value="Galactokinase_CS"/>
</dbReference>
<dbReference type="InterPro" id="IPR019539">
    <property type="entry name" value="GalKase_N"/>
</dbReference>
<dbReference type="InterPro" id="IPR013750">
    <property type="entry name" value="GHMP_kinase_C_dom"/>
</dbReference>
<dbReference type="InterPro" id="IPR036554">
    <property type="entry name" value="GHMP_kinase_C_sf"/>
</dbReference>
<dbReference type="InterPro" id="IPR006204">
    <property type="entry name" value="GHMP_kinase_N_dom"/>
</dbReference>
<dbReference type="InterPro" id="IPR006203">
    <property type="entry name" value="GHMP_knse_ATP-bd_CS"/>
</dbReference>
<dbReference type="InterPro" id="IPR006206">
    <property type="entry name" value="Mevalonate/galactokinase"/>
</dbReference>
<dbReference type="InterPro" id="IPR020568">
    <property type="entry name" value="Ribosomal_Su5_D2-typ_SF"/>
</dbReference>
<dbReference type="InterPro" id="IPR014721">
    <property type="entry name" value="Ribsml_uS5_D2-typ_fold_subgr"/>
</dbReference>
<dbReference type="NCBIfam" id="TIGR00131">
    <property type="entry name" value="gal_kin"/>
    <property type="match status" value="1"/>
</dbReference>
<dbReference type="NCBIfam" id="NF003472">
    <property type="entry name" value="PRK05101.1"/>
    <property type="match status" value="1"/>
</dbReference>
<dbReference type="NCBIfam" id="NF003705">
    <property type="entry name" value="PRK05322.1"/>
    <property type="match status" value="1"/>
</dbReference>
<dbReference type="PANTHER" id="PTHR10457:SF7">
    <property type="entry name" value="GALACTOKINASE-RELATED"/>
    <property type="match status" value="1"/>
</dbReference>
<dbReference type="PANTHER" id="PTHR10457">
    <property type="entry name" value="MEVALONATE KINASE/GALACTOKINASE"/>
    <property type="match status" value="1"/>
</dbReference>
<dbReference type="Pfam" id="PF10509">
    <property type="entry name" value="GalKase_gal_bdg"/>
    <property type="match status" value="1"/>
</dbReference>
<dbReference type="Pfam" id="PF08544">
    <property type="entry name" value="GHMP_kinases_C"/>
    <property type="match status" value="1"/>
</dbReference>
<dbReference type="Pfam" id="PF00288">
    <property type="entry name" value="GHMP_kinases_N"/>
    <property type="match status" value="1"/>
</dbReference>
<dbReference type="PIRSF" id="PIRSF000530">
    <property type="entry name" value="Galactokinase"/>
    <property type="match status" value="1"/>
</dbReference>
<dbReference type="PRINTS" id="PR00473">
    <property type="entry name" value="GALCTOKINASE"/>
</dbReference>
<dbReference type="PRINTS" id="PR00959">
    <property type="entry name" value="MEVGALKINASE"/>
</dbReference>
<dbReference type="SUPFAM" id="SSF55060">
    <property type="entry name" value="GHMP Kinase, C-terminal domain"/>
    <property type="match status" value="1"/>
</dbReference>
<dbReference type="SUPFAM" id="SSF54211">
    <property type="entry name" value="Ribosomal protein S5 domain 2-like"/>
    <property type="match status" value="1"/>
</dbReference>
<dbReference type="PROSITE" id="PS00106">
    <property type="entry name" value="GALACTOKINASE"/>
    <property type="match status" value="1"/>
</dbReference>
<dbReference type="PROSITE" id="PS00627">
    <property type="entry name" value="GHMP_KINASES_ATP"/>
    <property type="match status" value="1"/>
</dbReference>
<protein>
    <recommendedName>
        <fullName evidence="1">Galactokinase</fullName>
        <ecNumber evidence="1">2.7.1.6</ecNumber>
    </recommendedName>
    <alternativeName>
        <fullName evidence="1">Galactose kinase</fullName>
    </alternativeName>
</protein>
<feature type="chain" id="PRO_0000184635" description="Galactokinase">
    <location>
        <begin position="1"/>
        <end position="386"/>
    </location>
</feature>
<feature type="active site" description="Proton acceptor" evidence="1">
    <location>
        <position position="175"/>
    </location>
</feature>
<feature type="binding site" evidence="1">
    <location>
        <begin position="35"/>
        <end position="38"/>
    </location>
    <ligand>
        <name>substrate</name>
    </ligand>
</feature>
<feature type="binding site" evidence="1">
    <location>
        <begin position="125"/>
        <end position="131"/>
    </location>
    <ligand>
        <name>ATP</name>
        <dbReference type="ChEBI" id="CHEBI:30616"/>
    </ligand>
</feature>
<feature type="binding site" evidence="1">
    <location>
        <position position="131"/>
    </location>
    <ligand>
        <name>Mg(2+)</name>
        <dbReference type="ChEBI" id="CHEBI:18420"/>
    </ligand>
</feature>
<feature type="binding site" evidence="1">
    <location>
        <position position="163"/>
    </location>
    <ligand>
        <name>Mg(2+)</name>
        <dbReference type="ChEBI" id="CHEBI:18420"/>
    </ligand>
</feature>
<feature type="binding site" evidence="1">
    <location>
        <position position="224"/>
    </location>
    <ligand>
        <name>substrate</name>
    </ligand>
</feature>
<feature type="site" description="Transition state stabilizer" evidence="1">
    <location>
        <position position="29"/>
    </location>
</feature>
<organism>
    <name type="scientific">Vibrio cholerae serotype O1 (strain ATCC 39315 / El Tor Inaba N16961)</name>
    <dbReference type="NCBI Taxonomy" id="243277"/>
    <lineage>
        <taxon>Bacteria</taxon>
        <taxon>Pseudomonadati</taxon>
        <taxon>Pseudomonadota</taxon>
        <taxon>Gammaproteobacteria</taxon>
        <taxon>Vibrionales</taxon>
        <taxon>Vibrionaceae</taxon>
        <taxon>Vibrio</taxon>
    </lineage>
</organism>
<name>GAL1_VIBCH</name>
<sequence>MSELIQNVTTTFAQLFGYDATHLVQAPGRVNLIGEHTDYNDGFVLPCAINYQTVVAAAKREDFLVRLVAVDYDNDTDEFDLREEIAFQPKKMWSNYIRGVIKCLIERGFEFNGADIVVSGNVPQGAGLSSSAALEVVIGQTFKELYQLKISQAEIALNGQQAENQFVGCNCGIMDQMISAQGQANHAMLLDCRSLQTEAVAMPEQMAVVILNSNKKRGLVESEYNTRRQQCEAAAKTFGVKALRDVTLAQLTAKQAELDPVVAKRARHVITENERTLHAAQALREGNMPRLGELMAASHASMRDDFEITVKEIDTLVEIVQSVIGDQGGVRMTGGGFGGCVVALVHPKQVEAVQQAVAEHYEAATGLKASIYVCHATSGAGLVELA</sequence>
<accession>Q9KRP1</accession>
<reference key="1">
    <citation type="journal article" date="2000" name="Nature">
        <title>DNA sequence of both chromosomes of the cholera pathogen Vibrio cholerae.</title>
        <authorList>
            <person name="Heidelberg J.F."/>
            <person name="Eisen J.A."/>
            <person name="Nelson W.C."/>
            <person name="Clayton R.A."/>
            <person name="Gwinn M.L."/>
            <person name="Dodson R.J."/>
            <person name="Haft D.H."/>
            <person name="Hickey E.K."/>
            <person name="Peterson J.D."/>
            <person name="Umayam L.A."/>
            <person name="Gill S.R."/>
            <person name="Nelson K.E."/>
            <person name="Read T.D."/>
            <person name="Tettelin H."/>
            <person name="Richardson D.L."/>
            <person name="Ermolaeva M.D."/>
            <person name="Vamathevan J.J."/>
            <person name="Bass S."/>
            <person name="Qin H."/>
            <person name="Dragoi I."/>
            <person name="Sellers P."/>
            <person name="McDonald L.A."/>
            <person name="Utterback T.R."/>
            <person name="Fleischmann R.D."/>
            <person name="Nierman W.C."/>
            <person name="White O."/>
            <person name="Salzberg S.L."/>
            <person name="Smith H.O."/>
            <person name="Colwell R.R."/>
            <person name="Mekalanos J.J."/>
            <person name="Venter J.C."/>
            <person name="Fraser C.M."/>
        </authorList>
    </citation>
    <scope>NUCLEOTIDE SEQUENCE [LARGE SCALE GENOMIC DNA]</scope>
    <source>
        <strain>ATCC 39315 / El Tor Inaba N16961</strain>
    </source>
</reference>
<gene>
    <name evidence="1" type="primary">galK</name>
    <name type="ordered locus">VC_1595</name>
</gene>